<gene>
    <name type="primary">CCK</name>
</gene>
<proteinExistence type="evidence at protein level"/>
<evidence type="ECO:0000250" key="1">
    <source>
        <dbReference type="UniProtKB" id="Q9TS44"/>
    </source>
</evidence>
<evidence type="ECO:0000269" key="2">
    <source>
    </source>
</evidence>
<evidence type="ECO:0000305" key="3"/>
<name>CCKN_NOTEU</name>
<dbReference type="PIR" id="A43001">
    <property type="entry name" value="A43001"/>
</dbReference>
<dbReference type="GO" id="GO:0005576">
    <property type="term" value="C:extracellular region"/>
    <property type="evidence" value="ECO:0007669"/>
    <property type="project" value="UniProtKB-SubCell"/>
</dbReference>
<dbReference type="GO" id="GO:0005179">
    <property type="term" value="F:hormone activity"/>
    <property type="evidence" value="ECO:0007669"/>
    <property type="project" value="UniProtKB-KW"/>
</dbReference>
<dbReference type="InterPro" id="IPR013152">
    <property type="entry name" value="Gastrin/cholecystokinin_CS"/>
</dbReference>
<dbReference type="PROSITE" id="PS00259">
    <property type="entry name" value="GASTRIN"/>
    <property type="match status" value="1"/>
</dbReference>
<protein>
    <recommendedName>
        <fullName>Cholecystokinin</fullName>
        <shortName>CCK</shortName>
    </recommendedName>
</protein>
<sequence>DYMGWMDF</sequence>
<reference key="1">
    <citation type="journal article" date="1988" name="Peptides">
        <title>Cholecystokinin octapeptide purified from brains of Australian marsupials.</title>
        <authorList>
            <person name="Fan Z.W."/>
            <person name="Eng J."/>
            <person name="Shaw G."/>
            <person name="Yalow R.S."/>
        </authorList>
    </citation>
    <scope>PROTEIN SEQUENCE</scope>
    <scope>SULFATION AT TYR-2</scope>
    <scope>AMIDATION AT PHE-8</scope>
    <source>
        <tissue>Brain</tissue>
    </source>
</reference>
<keyword id="KW-0027">Amidation</keyword>
<keyword id="KW-0903">Direct protein sequencing</keyword>
<keyword id="KW-0372">Hormone</keyword>
<keyword id="KW-0964">Secreted</keyword>
<keyword id="KW-0765">Sulfation</keyword>
<organism>
    <name type="scientific">Notamacropus eugenii</name>
    <name type="common">Tammar wallaby</name>
    <name type="synonym">Macropus eugenii</name>
    <dbReference type="NCBI Taxonomy" id="9315"/>
    <lineage>
        <taxon>Eukaryota</taxon>
        <taxon>Metazoa</taxon>
        <taxon>Chordata</taxon>
        <taxon>Craniata</taxon>
        <taxon>Vertebrata</taxon>
        <taxon>Euteleostomi</taxon>
        <taxon>Mammalia</taxon>
        <taxon>Metatheria</taxon>
        <taxon>Diprotodontia</taxon>
        <taxon>Macropodidae</taxon>
        <taxon>Notamacropus</taxon>
    </lineage>
</organism>
<feature type="peptide" id="PRO_0000043889" description="Cholecystokinin">
    <location>
        <begin position="1"/>
        <end position="8"/>
    </location>
</feature>
<feature type="modified residue" description="Sulfotyrosine" evidence="2">
    <location>
        <position position="2"/>
    </location>
</feature>
<feature type="modified residue" description="Phenylalanine amide" evidence="2">
    <location>
        <position position="8"/>
    </location>
</feature>
<accession>P68126</accession>
<accession>P30369</accession>
<comment type="function">
    <text evidence="1">This peptide hormone induces gall bladder contraction and the release of pancreatic enzymes in the gut. Its function in the brain is not clear. Binding to CCK-A receptors stimulates amylase release from the pancreas, binding to CCK-B receptors stimulates gastric acid secretion.</text>
</comment>
<comment type="subunit">
    <text evidence="1">Binds to CCK-A receptors in the pancreas and CCK-B receptors in the brain.</text>
</comment>
<comment type="subcellular location">
    <subcellularLocation>
        <location>Secreted</location>
    </subcellularLocation>
</comment>
<comment type="similarity">
    <text evidence="3">Belongs to the gastrin/cholecystokinin family.</text>
</comment>